<sequence>MELSPRAAELTNLFESRIRNFYANFQVDEIGRVVSVGDGIAQVYGLNEIQAGEMVLFANGVKGMALNLENENVGIVVFGGDTAIKEGDLVKRTGSIVDVPAGKAMLGRVVDAMGVPIDGKGALSDHEQRRVEVKAPGILERKSVHEPMQTGLKAVDSLVPIGRGQRELLIGDRQTGKTTIAIDTILNQKQINSRATSESETMYCVYVAIGQKRSTVGQLIQTLEEANALEYSILVAATASDPAPLQFLAPYSGCAMGEYFRDNGMHALIIYDDLSKQAVAYRQMSLLLRRPPGREAFPGDVFYLHSRLLERAAKRSDQTGAGSLTALPVIETQAGDVSAYIPTNVISITDGQICLETELFYRGIRPAINVGLSVSRVGSAAQLKAMKQVCGSLKLELAQYREVAAFAQFGSDLDAATQALLNRGARLTEVLKQPQYAPLPIEKQILVIYAAVNGFCDRMPLDRISQYEKAILNSVKPELLQALKGGLTNERKMELDAFLKERALALI</sequence>
<reference key="1">
    <citation type="journal article" date="1997" name="Nat. Genet.">
        <title>The mitochondrial genome of Arabidopsis thaliana contains 57 genes in 366,924 nucleotides.</title>
        <authorList>
            <person name="Unseld M."/>
            <person name="Marienfeld J.R."/>
            <person name="Brandt P."/>
            <person name="Brennicke A."/>
        </authorList>
    </citation>
    <scope>NUCLEOTIDE SEQUENCE [LARGE SCALE GENOMIC DNA]</scope>
    <source>
        <strain>cv. C24</strain>
    </source>
</reference>
<reference key="2">
    <citation type="journal article" date="2018" name="Plant Cell">
        <title>Correction of persistent errors in Arabidopsis reference mitochondrial genomes.</title>
        <authorList>
            <person name="Sloan D.B."/>
            <person name="Wu Z."/>
            <person name="Sharbrough J."/>
        </authorList>
    </citation>
    <scope>NUCLEOTIDE SEQUENCE [LARGE SCALE GENOMIC DNA]</scope>
    <scope>RNA EDITING</scope>
    <source>
        <strain>cv. Columbia</strain>
    </source>
</reference>
<reference key="3">
    <citation type="journal article" date="1999" name="Nature">
        <title>Sequence and analysis of chromosome 2 of the plant Arabidopsis thaliana.</title>
        <authorList>
            <person name="Lin X."/>
            <person name="Kaul S."/>
            <person name="Rounsley S.D."/>
            <person name="Shea T.P."/>
            <person name="Benito M.-I."/>
            <person name="Town C.D."/>
            <person name="Fujii C.Y."/>
            <person name="Mason T.M."/>
            <person name="Bowman C.L."/>
            <person name="Barnstead M.E."/>
            <person name="Feldblyum T.V."/>
            <person name="Buell C.R."/>
            <person name="Ketchum K.A."/>
            <person name="Lee J.J."/>
            <person name="Ronning C.M."/>
            <person name="Koo H.L."/>
            <person name="Moffat K.S."/>
            <person name="Cronin L.A."/>
            <person name="Shen M."/>
            <person name="Pai G."/>
            <person name="Van Aken S."/>
            <person name="Umayam L."/>
            <person name="Tallon L.J."/>
            <person name="Gill J.E."/>
            <person name="Adams M.D."/>
            <person name="Carrera A.J."/>
            <person name="Creasy T.H."/>
            <person name="Goodman H.M."/>
            <person name="Somerville C.R."/>
            <person name="Copenhaver G.P."/>
            <person name="Preuss D."/>
            <person name="Nierman W.C."/>
            <person name="White O."/>
            <person name="Eisen J.A."/>
            <person name="Salzberg S.L."/>
            <person name="Fraser C.M."/>
            <person name="Venter J.C."/>
        </authorList>
    </citation>
    <scope>NUCLEOTIDE SEQUENCE [LARGE SCALE GENOMIC DNA] (AT2G07698)</scope>
    <source>
        <strain>cv. Columbia</strain>
    </source>
</reference>
<reference key="4">
    <citation type="journal article" date="2001" name="Plant Physiol.">
        <title>Proteomic approach to identify novel mitochondrial proteins in Arabidopsis.</title>
        <authorList>
            <person name="Kruft V."/>
            <person name="Eubel H."/>
            <person name="Jaensch L."/>
            <person name="Werhahn W."/>
            <person name="Braun H.-P."/>
        </authorList>
    </citation>
    <scope>PROTEIN SEQUENCE OF 1-13</scope>
    <scope>SUBCELLULAR LOCATION</scope>
    <source>
        <tissue>Leaf</tissue>
        <tissue>Stem</tissue>
    </source>
</reference>
<reference key="5">
    <citation type="journal article" date="1999" name="Proc. Natl. Acad. Sci. U.S.A.">
        <title>RNA editing in Arabidopsis mitochondria effects 441 C to U changes in ORFs.</title>
        <authorList>
            <person name="Giege P."/>
            <person name="Brennicke A."/>
        </authorList>
    </citation>
    <scope>RNA EDITING</scope>
</reference>
<reference key="6">
    <citation type="journal article" date="2004" name="Plant Cell">
        <title>Experimental analysis of the Arabidopsis mitochondrial proteome highlights signaling and regulatory components, provides assessment of targeting prediction programs, and indicates plant-specific mitochondrial proteins.</title>
        <authorList>
            <person name="Heazlewood J.L."/>
            <person name="Tonti-Filippini J.S."/>
            <person name="Gout A.M."/>
            <person name="Day D.A."/>
            <person name="Whelan J."/>
            <person name="Millar A.H."/>
        </authorList>
    </citation>
    <scope>IDENTIFICATION BY MASS SPECTROMETRY</scope>
    <scope>SUBCELLULAR LOCATION [LARGE SCALE ANALYSIS]</scope>
    <source>
        <strain>cv. Landsberg erecta</strain>
    </source>
</reference>
<evidence type="ECO:0000250" key="1"/>
<evidence type="ECO:0000269" key="2">
    <source>
    </source>
</evidence>
<evidence type="ECO:0000269" key="3">
    <source>
    </source>
</evidence>
<evidence type="ECO:0000269" key="4">
    <source>
    </source>
</evidence>
<evidence type="ECO:0000269" key="5">
    <source>
    </source>
</evidence>
<evidence type="ECO:0000305" key="6"/>
<feature type="chain" id="PRO_0000144395" description="ATP synthase subunit alpha, mitochondrial">
    <location>
        <begin position="1"/>
        <end position="507"/>
    </location>
</feature>
<feature type="binding site" evidence="1">
    <location>
        <begin position="171"/>
        <end position="178"/>
    </location>
    <ligand>
        <name>ATP</name>
        <dbReference type="ChEBI" id="CHEBI:30616"/>
    </ligand>
</feature>
<feature type="site" description="Required for activity" evidence="1">
    <location>
        <position position="373"/>
    </location>
</feature>
<feature type="sequence conflict" description="In Ref. 1; CAA69802." evidence="6" ref="1">
    <original>D</original>
    <variation>G</variation>
    <location>
        <position position="172"/>
    </location>
</feature>
<comment type="function">
    <text>Mitochondrial membrane ATP synthase (F(1)F(0) ATP synthase or Complex V) produces ATP from ADP in the presence of a proton gradient across the membrane which is generated by electron transport complexes of the respiratory chain. F-type ATPases consist of two structural domains, F(1) - containing the extramembraneous catalytic core, and F(0) - containing the membrane proton channel, linked together by a central stalk and a peripheral stalk. During catalysis, ATP synthesis in the catalytic domain of F(1) is coupled via a rotary mechanism of the central stalk subunits to proton translocation. Subunits alpha and beta form the catalytic core in F(1). Rotation of the central stalk against the surrounding alpha(3)beta(3) subunits leads to hydrolysis of ATP in three separate catalytic sites on the beta subunits. Subunit alpha does not bear the catalytic high-affinity ATP-binding sites.</text>
</comment>
<comment type="subunit">
    <text>F-type ATPases have 2 components, CF(1) - the catalytic core - and CF(0) - the membrane proton channel. CF(1) has five subunits: alpha(3), beta(3), gamma(1), delta(1), epsilon(1). CF(0) has three main subunits: a, b and c.</text>
</comment>
<comment type="subcellular location">
    <subcellularLocation>
        <location evidence="3 4">Mitochondrion</location>
    </subcellularLocation>
    <subcellularLocation>
        <location evidence="6">Mitochondrion inner membrane</location>
    </subcellularLocation>
    <text evidence="6">Peripheral membrane protein.</text>
</comment>
<comment type="RNA editing">
    <location>
        <position position="393" evidence="2 5"/>
    </location>
    <location>
        <position position="431" evidence="2 5"/>
    </location>
    <location>
        <position position="472" evidence="2 5"/>
    </location>
    <location>
        <position position="495" evidence="2 5"/>
    </location>
</comment>
<comment type="miscellaneous">
    <text>A stretch of 270 kb of the mitochondrial genome is duplicated within the centromere of chromosome 2 resulting in the duplication of the gene. The expression of this duplicated gene (At2g07698) is not demonstrated. It is also probably not RNA edited and therefore differs in all the positions known to be edited.</text>
</comment>
<comment type="similarity">
    <text evidence="6">Belongs to the ATPase alpha/beta chains family.</text>
</comment>
<comment type="sequence caution" evidence="6">
    <conflict type="erroneous gene model prediction">
        <sequence resource="EMBL-CDS" id="AAM15496"/>
    </conflict>
</comment>
<organism>
    <name type="scientific">Arabidopsis thaliana</name>
    <name type="common">Mouse-ear cress</name>
    <dbReference type="NCBI Taxonomy" id="3702"/>
    <lineage>
        <taxon>Eukaryota</taxon>
        <taxon>Viridiplantae</taxon>
        <taxon>Streptophyta</taxon>
        <taxon>Embryophyta</taxon>
        <taxon>Tracheophyta</taxon>
        <taxon>Spermatophyta</taxon>
        <taxon>Magnoliopsida</taxon>
        <taxon>eudicotyledons</taxon>
        <taxon>Gunneridae</taxon>
        <taxon>Pentapetalae</taxon>
        <taxon>rosids</taxon>
        <taxon>malvids</taxon>
        <taxon>Brassicales</taxon>
        <taxon>Brassicaceae</taxon>
        <taxon>Camelineae</taxon>
        <taxon>Arabidopsis</taxon>
    </lineage>
</organism>
<protein>
    <recommendedName>
        <fullName>ATP synthase subunit alpha, mitochondrial</fullName>
    </recommendedName>
</protein>
<geneLocation type="mitochondrion"/>
<gene>
    <name type="primary">ATPA</name>
    <name type="synonym">ATP1</name>
    <name type="ordered locus">AtMg01190</name>
</gene>
<proteinExistence type="evidence at protein level"/>
<keyword id="KW-0066">ATP synthesis</keyword>
<keyword id="KW-0067">ATP-binding</keyword>
<keyword id="KW-0139">CF(1)</keyword>
<keyword id="KW-0903">Direct protein sequencing</keyword>
<keyword id="KW-0375">Hydrogen ion transport</keyword>
<keyword id="KW-0406">Ion transport</keyword>
<keyword id="KW-0472">Membrane</keyword>
<keyword id="KW-0496">Mitochondrion</keyword>
<keyword id="KW-0999">Mitochondrion inner membrane</keyword>
<keyword id="KW-0547">Nucleotide-binding</keyword>
<keyword id="KW-1185">Reference proteome</keyword>
<keyword id="KW-0691">RNA editing</keyword>
<keyword id="KW-0813">Transport</keyword>
<name>ATPAM_ARATH</name>
<accession>P92549</accession>
<accession>A0A2P2CLF9</accession>
<accession>Q1NZ05</accession>
<accession>Q8S890</accession>
<dbReference type="EMBL" id="Y08501">
    <property type="protein sequence ID" value="CAA69802.3"/>
    <property type="status" value="ALT_SEQ"/>
    <property type="molecule type" value="Genomic_DNA"/>
</dbReference>
<dbReference type="EMBL" id="BK010421">
    <property type="protein sequence ID" value="DAB41502.2"/>
    <property type="molecule type" value="Genomic_DNA"/>
</dbReference>
<dbReference type="EMBL" id="AC007729">
    <property type="protein sequence ID" value="AAM15496.1"/>
    <property type="status" value="ALT_SEQ"/>
    <property type="molecule type" value="Genomic_DNA"/>
</dbReference>
<dbReference type="RefSeq" id="NP_085571.2">
    <property type="nucleotide sequence ID" value="NC_001284.2"/>
</dbReference>
<dbReference type="SMR" id="P92549"/>
<dbReference type="BioGRID" id="566531">
    <property type="interactions" value="6"/>
</dbReference>
<dbReference type="FunCoup" id="P92549">
    <property type="interactions" value="2284"/>
</dbReference>
<dbReference type="IntAct" id="P92549">
    <property type="interactions" value="1"/>
</dbReference>
<dbReference type="MINT" id="P92549"/>
<dbReference type="STRING" id="3702.A0A2P2CLF9"/>
<dbReference type="PaxDb" id="3702-ATMG01190.1"/>
<dbReference type="ProteomicsDB" id="246593"/>
<dbReference type="Araport" id="ATMG01190"/>
<dbReference type="TAIR" id="ATMG01190">
    <property type="gene designation" value="ATP1"/>
</dbReference>
<dbReference type="eggNOG" id="KOG1353">
    <property type="taxonomic scope" value="Eukaryota"/>
</dbReference>
<dbReference type="InParanoid" id="P92549"/>
<dbReference type="BioCyc" id="ARA:ATMG01190-MONOMER"/>
<dbReference type="PRO" id="PR:P92549"/>
<dbReference type="Proteomes" id="UP000006548">
    <property type="component" value="Mitochondrion MT"/>
</dbReference>
<dbReference type="ExpressionAtlas" id="P92549">
    <property type="expression patterns" value="baseline and differential"/>
</dbReference>
<dbReference type="GO" id="GO:0005743">
    <property type="term" value="C:mitochondrial inner membrane"/>
    <property type="evidence" value="ECO:0007669"/>
    <property type="project" value="UniProtKB-SubCell"/>
</dbReference>
<dbReference type="GO" id="GO:0045259">
    <property type="term" value="C:proton-transporting ATP synthase complex"/>
    <property type="evidence" value="ECO:0007669"/>
    <property type="project" value="UniProtKB-KW"/>
</dbReference>
<dbReference type="GO" id="GO:0043531">
    <property type="term" value="F:ADP binding"/>
    <property type="evidence" value="ECO:0000318"/>
    <property type="project" value="GO_Central"/>
</dbReference>
<dbReference type="GO" id="GO:0005524">
    <property type="term" value="F:ATP binding"/>
    <property type="evidence" value="ECO:0000318"/>
    <property type="project" value="GO_Central"/>
</dbReference>
<dbReference type="GO" id="GO:0046933">
    <property type="term" value="F:proton-transporting ATP synthase activity, rotational mechanism"/>
    <property type="evidence" value="ECO:0007669"/>
    <property type="project" value="InterPro"/>
</dbReference>
<dbReference type="GO" id="GO:0015986">
    <property type="term" value="P:proton motive force-driven ATP synthesis"/>
    <property type="evidence" value="ECO:0000318"/>
    <property type="project" value="GO_Central"/>
</dbReference>
<dbReference type="CDD" id="cd18113">
    <property type="entry name" value="ATP-synt_F1_alpha_C"/>
    <property type="match status" value="1"/>
</dbReference>
<dbReference type="CDD" id="cd18116">
    <property type="entry name" value="ATP-synt_F1_alpha_N"/>
    <property type="match status" value="1"/>
</dbReference>
<dbReference type="CDD" id="cd01132">
    <property type="entry name" value="F1-ATPase_alpha_CD"/>
    <property type="match status" value="1"/>
</dbReference>
<dbReference type="FunFam" id="1.20.150.20:FF:000001">
    <property type="entry name" value="ATP synthase subunit alpha"/>
    <property type="match status" value="1"/>
</dbReference>
<dbReference type="FunFam" id="2.40.30.20:FF:000001">
    <property type="entry name" value="ATP synthase subunit alpha"/>
    <property type="match status" value="1"/>
</dbReference>
<dbReference type="FunFam" id="3.40.50.300:FF:002432">
    <property type="entry name" value="ATP synthase subunit alpha, mitochondrial"/>
    <property type="match status" value="1"/>
</dbReference>
<dbReference type="Gene3D" id="2.40.30.20">
    <property type="match status" value="1"/>
</dbReference>
<dbReference type="Gene3D" id="1.20.150.20">
    <property type="entry name" value="ATP synthase alpha/beta chain, C-terminal domain"/>
    <property type="match status" value="1"/>
</dbReference>
<dbReference type="Gene3D" id="3.40.50.300">
    <property type="entry name" value="P-loop containing nucleotide triphosphate hydrolases"/>
    <property type="match status" value="1"/>
</dbReference>
<dbReference type="HAMAP" id="MF_01346">
    <property type="entry name" value="ATP_synth_alpha_bact"/>
    <property type="match status" value="1"/>
</dbReference>
<dbReference type="InterPro" id="IPR023366">
    <property type="entry name" value="ATP_synth_asu-like_sf"/>
</dbReference>
<dbReference type="InterPro" id="IPR000793">
    <property type="entry name" value="ATP_synth_asu_C"/>
</dbReference>
<dbReference type="InterPro" id="IPR038376">
    <property type="entry name" value="ATP_synth_asu_C_sf"/>
</dbReference>
<dbReference type="InterPro" id="IPR033732">
    <property type="entry name" value="ATP_synth_F1_a_nt-bd_dom"/>
</dbReference>
<dbReference type="InterPro" id="IPR005294">
    <property type="entry name" value="ATP_synth_F1_asu"/>
</dbReference>
<dbReference type="InterPro" id="IPR020003">
    <property type="entry name" value="ATPase_a/bsu_AS"/>
</dbReference>
<dbReference type="InterPro" id="IPR004100">
    <property type="entry name" value="ATPase_F1/V1/A1_a/bsu_N"/>
</dbReference>
<dbReference type="InterPro" id="IPR036121">
    <property type="entry name" value="ATPase_F1/V1/A1_a/bsu_N_sf"/>
</dbReference>
<dbReference type="InterPro" id="IPR000194">
    <property type="entry name" value="ATPase_F1/V1/A1_a/bsu_nucl-bd"/>
</dbReference>
<dbReference type="InterPro" id="IPR027417">
    <property type="entry name" value="P-loop_NTPase"/>
</dbReference>
<dbReference type="NCBIfam" id="TIGR00962">
    <property type="entry name" value="atpA"/>
    <property type="match status" value="1"/>
</dbReference>
<dbReference type="NCBIfam" id="NF009884">
    <property type="entry name" value="PRK13343.1"/>
    <property type="match status" value="1"/>
</dbReference>
<dbReference type="PANTHER" id="PTHR48082">
    <property type="entry name" value="ATP SYNTHASE SUBUNIT ALPHA, MITOCHONDRIAL"/>
    <property type="match status" value="1"/>
</dbReference>
<dbReference type="PANTHER" id="PTHR48082:SF2">
    <property type="entry name" value="ATP SYNTHASE SUBUNIT ALPHA, MITOCHONDRIAL"/>
    <property type="match status" value="1"/>
</dbReference>
<dbReference type="Pfam" id="PF00006">
    <property type="entry name" value="ATP-synt_ab"/>
    <property type="match status" value="1"/>
</dbReference>
<dbReference type="Pfam" id="PF00306">
    <property type="entry name" value="ATP-synt_ab_C"/>
    <property type="match status" value="1"/>
</dbReference>
<dbReference type="Pfam" id="PF02874">
    <property type="entry name" value="ATP-synt_ab_N"/>
    <property type="match status" value="1"/>
</dbReference>
<dbReference type="PIRSF" id="PIRSF039088">
    <property type="entry name" value="F_ATPase_subunit_alpha"/>
    <property type="match status" value="1"/>
</dbReference>
<dbReference type="SUPFAM" id="SSF47917">
    <property type="entry name" value="C-terminal domain of alpha and beta subunits of F1 ATP synthase"/>
    <property type="match status" value="1"/>
</dbReference>
<dbReference type="SUPFAM" id="SSF50615">
    <property type="entry name" value="N-terminal domain of alpha and beta subunits of F1 ATP synthase"/>
    <property type="match status" value="1"/>
</dbReference>
<dbReference type="SUPFAM" id="SSF52540">
    <property type="entry name" value="P-loop containing nucleoside triphosphate hydrolases"/>
    <property type="match status" value="1"/>
</dbReference>
<dbReference type="PROSITE" id="PS00152">
    <property type="entry name" value="ATPASE_ALPHA_BETA"/>
    <property type="match status" value="1"/>
</dbReference>